<sequence length="1021" mass="112099">MGVLRVYVILILVGFCVQIVVVNSQNLTCNSNDLKALEGFMRGLESSIDGWKWNESSSFSSNCCDWVGISCKSSVSLGLDDVNESGRVVELELGRRKLSGKLSESVAKLDQLKVLNLTHNSLSGSIAASLLNLSNLEVLDLSSNDFSGLFPSLINLPSLRVLNVYENSFHGLIPASLCNNLPRIREIDLAMNYFDGSIPVGIGNCSSVEYLGLASNNLSGSIPQELFQLSNLSVLALQNNRLSGALSSKLGKLSNLGRLDISSNKFSGKIPDVFLELNKLWYFSAQSNLFNGEMPRSLSNSRSISLLSLRNNTLSGQIYLNCSAMTNLTSLDLASNSFSGSIPSNLPNCLRLKTINFAKIKFIAQIPESFKNFQSLTSLSFSNSSIQNISSALEILQHCQNLKTLVLTLNFQKEELPSVPSLQFKNLKVLIIASCQLRGTVPQWLSNSPSLQLLDLSWNQLSGTIPPWLGSLNSLFYLDLSNNTFIGEIPHSLTSLQSLVSKENAVEEPSPDFPFFKKKNTNAGGLQYNQPSSFPPMIDLSYNSLNGSIWPEFGDLRQLHVLNLKNNNLSGNIPANLSGMTSLEVLDLSHNNLSGNIPPSLVKLSFLSTFSVAYNKLSGPIPTGVQFQTFPNSSFEGNQGLCGEHASPCHITDQSPHGSAVKSKKNIRKIVAVAVGTGLGTVFLLTVTLLIILRTTSRGEVDPEKKADADEIELGSRSVVLFHNKDSNNELSLDDILKSTSSFNQANIIGCGGFGLVYKATLPDGTKVAIKRLSGDTGQMDREFQAEVETLSRAQHPNLVHLLGYCNYKNDKLLIYSYMDNGSLDYWLHEKVDGPPSLDWKTRLRIARGAAEGLAYLHQSCEPHILHRDIKSSNILLSDTFVAHLADFGLARLILPYDTHVTTDLVGTLGYIPPEYGQASVATYKGDVYSFGVVLLELLTGRRPMDVCKPRGSRDLISWVLQMKTEKRESEIFDPFIYDKDHAEEMLLVLEIACRCLGENPKTRPTTQQLVSWLENIDVSS</sequence>
<organism>
    <name type="scientific">Daucus carota</name>
    <name type="common">Wild carrot</name>
    <dbReference type="NCBI Taxonomy" id="4039"/>
    <lineage>
        <taxon>Eukaryota</taxon>
        <taxon>Viridiplantae</taxon>
        <taxon>Streptophyta</taxon>
        <taxon>Embryophyta</taxon>
        <taxon>Tracheophyta</taxon>
        <taxon>Spermatophyta</taxon>
        <taxon>Magnoliopsida</taxon>
        <taxon>eudicotyledons</taxon>
        <taxon>Gunneridae</taxon>
        <taxon>Pentapetalae</taxon>
        <taxon>asterids</taxon>
        <taxon>campanulids</taxon>
        <taxon>Apiales</taxon>
        <taxon>Apiaceae</taxon>
        <taxon>Apioideae</taxon>
        <taxon>Scandiceae</taxon>
        <taxon>Daucinae</taxon>
        <taxon>Daucus</taxon>
        <taxon>Daucus sect. Daucus</taxon>
    </lineage>
</organism>
<accession>Q8LPB4</accession>
<reference key="1">
    <citation type="journal article" date="2002" name="Science">
        <title>An LRR receptor kinase involved in perception of a peptide plant hormone, phytosulfokine.</title>
        <authorList>
            <person name="Matsubayashi Y."/>
            <person name="Ogawa M."/>
            <person name="Morita A."/>
            <person name="Sakagami Y."/>
        </authorList>
    </citation>
    <scope>NUCLEOTIDE SEQUENCE [MRNA]</scope>
    <scope>FUNCTION</scope>
    <scope>TISSUE SPECIFICITY</scope>
    <scope>GLYCOSYLATION</scope>
</reference>
<reference key="2">
    <citation type="journal article" date="2007" name="J. Biol. Chem.">
        <title>Identification of ligand binding site of phytosulfokine receptor by on-column photoaffinity labeling.</title>
        <authorList>
            <person name="Shinohara H."/>
            <person name="Ogawa M."/>
            <person name="Sakagami Y."/>
            <person name="Matsubayashi Y."/>
        </authorList>
    </citation>
    <scope>MUTAGENESIS OF 503-GLU--LYS-517 AND 518-LYS--ILE-538</scope>
    <scope>IDENTIFICATION BY MASS SPECTROMETRY</scope>
</reference>
<dbReference type="EC" id="2.7.11.1"/>
<dbReference type="EMBL" id="AB060167">
    <property type="protein sequence ID" value="BAC00995.1"/>
    <property type="molecule type" value="mRNA"/>
</dbReference>
<dbReference type="PDB" id="4Z5W">
    <property type="method" value="X-ray"/>
    <property type="resolution" value="2.20 A"/>
    <property type="chains" value="A/B=24-659"/>
</dbReference>
<dbReference type="PDB" id="4Z61">
    <property type="method" value="X-ray"/>
    <property type="resolution" value="2.75 A"/>
    <property type="chains" value="A/B=24-659"/>
</dbReference>
<dbReference type="PDB" id="4Z62">
    <property type="method" value="X-ray"/>
    <property type="resolution" value="2.90 A"/>
    <property type="chains" value="A=24-659"/>
</dbReference>
<dbReference type="PDBsum" id="4Z5W"/>
<dbReference type="PDBsum" id="4Z61"/>
<dbReference type="PDBsum" id="4Z62"/>
<dbReference type="SMR" id="Q8LPB4"/>
<dbReference type="DIP" id="DIP-61782N"/>
<dbReference type="IntAct" id="Q8LPB4">
    <property type="interactions" value="2"/>
</dbReference>
<dbReference type="GlyCosmos" id="Q8LPB4">
    <property type="glycosylation" value="19 sites, No reported glycans"/>
</dbReference>
<dbReference type="EvolutionaryTrace" id="Q8LPB4"/>
<dbReference type="GO" id="GO:0005886">
    <property type="term" value="C:plasma membrane"/>
    <property type="evidence" value="ECO:0007669"/>
    <property type="project" value="UniProtKB-SubCell"/>
</dbReference>
<dbReference type="GO" id="GO:0005524">
    <property type="term" value="F:ATP binding"/>
    <property type="evidence" value="ECO:0007669"/>
    <property type="project" value="UniProtKB-KW"/>
</dbReference>
<dbReference type="GO" id="GO:0106310">
    <property type="term" value="F:protein serine kinase activity"/>
    <property type="evidence" value="ECO:0007669"/>
    <property type="project" value="RHEA"/>
</dbReference>
<dbReference type="GO" id="GO:0004674">
    <property type="term" value="F:protein serine/threonine kinase activity"/>
    <property type="evidence" value="ECO:0007669"/>
    <property type="project" value="UniProtKB-KW"/>
</dbReference>
<dbReference type="GO" id="GO:0006952">
    <property type="term" value="P:defense response"/>
    <property type="evidence" value="ECO:0007669"/>
    <property type="project" value="UniProtKB-ARBA"/>
</dbReference>
<dbReference type="GO" id="GO:0051707">
    <property type="term" value="P:response to other organism"/>
    <property type="evidence" value="ECO:0007669"/>
    <property type="project" value="UniProtKB-ARBA"/>
</dbReference>
<dbReference type="FunFam" id="1.10.510.10:FF:000309">
    <property type="entry name" value="Leucine-rich repeat receptor-like protein kinase"/>
    <property type="match status" value="1"/>
</dbReference>
<dbReference type="FunFam" id="3.30.200.20:FF:000260">
    <property type="entry name" value="LRR receptor-like serine/threonine-protein kinase RPK2"/>
    <property type="match status" value="1"/>
</dbReference>
<dbReference type="FunFam" id="3.80.10.10:FF:000299">
    <property type="entry name" value="Piriformospora indica-insensitive protein 2"/>
    <property type="match status" value="1"/>
</dbReference>
<dbReference type="FunFam" id="3.80.10.10:FF:000213">
    <property type="entry name" value="Tyrosine-sulfated glycopeptide receptor 1"/>
    <property type="match status" value="1"/>
</dbReference>
<dbReference type="Gene3D" id="3.30.200.20">
    <property type="entry name" value="Phosphorylase Kinase, domain 1"/>
    <property type="match status" value="1"/>
</dbReference>
<dbReference type="Gene3D" id="3.80.10.10">
    <property type="entry name" value="Ribonuclease Inhibitor"/>
    <property type="match status" value="2"/>
</dbReference>
<dbReference type="Gene3D" id="1.10.510.10">
    <property type="entry name" value="Transferase(Phosphotransferase) domain 1"/>
    <property type="match status" value="1"/>
</dbReference>
<dbReference type="InterPro" id="IPR011009">
    <property type="entry name" value="Kinase-like_dom_sf"/>
</dbReference>
<dbReference type="InterPro" id="IPR001611">
    <property type="entry name" value="Leu-rich_rpt"/>
</dbReference>
<dbReference type="InterPro" id="IPR003591">
    <property type="entry name" value="Leu-rich_rpt_typical-subtyp"/>
</dbReference>
<dbReference type="InterPro" id="IPR032675">
    <property type="entry name" value="LRR_dom_sf"/>
</dbReference>
<dbReference type="InterPro" id="IPR055414">
    <property type="entry name" value="LRR_R13L4/SHOC2-like"/>
</dbReference>
<dbReference type="InterPro" id="IPR051716">
    <property type="entry name" value="Plant_RL_S/T_kinase"/>
</dbReference>
<dbReference type="InterPro" id="IPR000719">
    <property type="entry name" value="Prot_kinase_dom"/>
</dbReference>
<dbReference type="InterPro" id="IPR017441">
    <property type="entry name" value="Protein_kinase_ATP_BS"/>
</dbReference>
<dbReference type="InterPro" id="IPR008271">
    <property type="entry name" value="Ser/Thr_kinase_AS"/>
</dbReference>
<dbReference type="PANTHER" id="PTHR48053">
    <property type="entry name" value="LEUCINE RICH REPEAT FAMILY PROTEIN, EXPRESSED"/>
    <property type="match status" value="1"/>
</dbReference>
<dbReference type="PANTHER" id="PTHR48053:SF155">
    <property type="entry name" value="LOW QUALITY PROTEIN: RECEPTOR-LIKE PROTEIN 2"/>
    <property type="match status" value="1"/>
</dbReference>
<dbReference type="Pfam" id="PF00560">
    <property type="entry name" value="LRR_1"/>
    <property type="match status" value="3"/>
</dbReference>
<dbReference type="Pfam" id="PF23598">
    <property type="entry name" value="LRR_14"/>
    <property type="match status" value="1"/>
</dbReference>
<dbReference type="Pfam" id="PF13855">
    <property type="entry name" value="LRR_8"/>
    <property type="match status" value="1"/>
</dbReference>
<dbReference type="Pfam" id="PF00069">
    <property type="entry name" value="Pkinase"/>
    <property type="match status" value="1"/>
</dbReference>
<dbReference type="PRINTS" id="PR00019">
    <property type="entry name" value="LEURICHRPT"/>
</dbReference>
<dbReference type="SMART" id="SM00369">
    <property type="entry name" value="LRR_TYP"/>
    <property type="match status" value="8"/>
</dbReference>
<dbReference type="SMART" id="SM00220">
    <property type="entry name" value="S_TKc"/>
    <property type="match status" value="1"/>
</dbReference>
<dbReference type="SUPFAM" id="SSF52058">
    <property type="entry name" value="L domain-like"/>
    <property type="match status" value="2"/>
</dbReference>
<dbReference type="SUPFAM" id="SSF56112">
    <property type="entry name" value="Protein kinase-like (PK-like)"/>
    <property type="match status" value="1"/>
</dbReference>
<dbReference type="SUPFAM" id="SSF52047">
    <property type="entry name" value="RNI-like"/>
    <property type="match status" value="1"/>
</dbReference>
<dbReference type="PROSITE" id="PS51450">
    <property type="entry name" value="LRR"/>
    <property type="match status" value="13"/>
</dbReference>
<dbReference type="PROSITE" id="PS00107">
    <property type="entry name" value="PROTEIN_KINASE_ATP"/>
    <property type="match status" value="1"/>
</dbReference>
<dbReference type="PROSITE" id="PS50011">
    <property type="entry name" value="PROTEIN_KINASE_DOM"/>
    <property type="match status" value="1"/>
</dbReference>
<dbReference type="PROSITE" id="PS00108">
    <property type="entry name" value="PROTEIN_KINASE_ST"/>
    <property type="match status" value="1"/>
</dbReference>
<feature type="signal peptide" evidence="1">
    <location>
        <begin position="1"/>
        <end position="24"/>
    </location>
</feature>
<feature type="chain" id="PRO_0000024372" description="Phytosulfokine receptor 1">
    <location>
        <begin position="25"/>
        <end position="1021"/>
    </location>
</feature>
<feature type="transmembrane region" description="Helical" evidence="1">
    <location>
        <begin position="673"/>
        <end position="693"/>
    </location>
</feature>
<feature type="repeat" description="LRR 1">
    <location>
        <begin position="21"/>
        <end position="43"/>
    </location>
</feature>
<feature type="repeat" description="LRR 2">
    <location>
        <begin position="85"/>
        <end position="109"/>
    </location>
</feature>
<feature type="repeat" description="LRR 3">
    <location>
        <begin position="110"/>
        <end position="133"/>
    </location>
</feature>
<feature type="repeat" description="LRR 4">
    <location>
        <begin position="135"/>
        <end position="156"/>
    </location>
</feature>
<feature type="repeat" description="LRR 5">
    <location>
        <begin position="158"/>
        <end position="180"/>
    </location>
</feature>
<feature type="repeat" description="LRR 6">
    <location>
        <begin position="181"/>
        <end position="205"/>
    </location>
</feature>
<feature type="repeat" description="LRR 7">
    <location>
        <begin position="206"/>
        <end position="229"/>
    </location>
</feature>
<feature type="repeat" description="LRR 8">
    <location>
        <begin position="231"/>
        <end position="252"/>
    </location>
</feature>
<feature type="repeat" description="LRR 9">
    <location>
        <begin position="253"/>
        <end position="277"/>
    </location>
</feature>
<feature type="repeat" description="LRR 10">
    <location>
        <begin position="301"/>
        <end position="325"/>
    </location>
</feature>
<feature type="repeat" description="LRR 11">
    <location>
        <begin position="326"/>
        <end position="349"/>
    </location>
</feature>
<feature type="repeat" description="LRR 12">
    <location>
        <begin position="351"/>
        <end position="372"/>
    </location>
</feature>
<feature type="repeat" description="LRR 13">
    <location>
        <begin position="373"/>
        <end position="397"/>
    </location>
</feature>
<feature type="repeat" description="LRR 14">
    <location>
        <begin position="402"/>
        <end position="426"/>
    </location>
</feature>
<feature type="repeat" description="LRR 15">
    <location>
        <begin position="428"/>
        <end position="448"/>
    </location>
</feature>
<feature type="repeat" description="LRR 16">
    <location>
        <begin position="449"/>
        <end position="474"/>
    </location>
</feature>
<feature type="repeat" description="LRR 17">
    <location>
        <begin position="476"/>
        <end position="496"/>
    </location>
</feature>
<feature type="repeat" description="LRR 18; atypical">
    <location>
        <begin position="498"/>
        <end position="555"/>
    </location>
</feature>
<feature type="repeat" description="LRR 19">
    <location>
        <begin position="556"/>
        <end position="580"/>
    </location>
</feature>
<feature type="repeat" description="LRR 20">
    <location>
        <begin position="581"/>
        <end position="604"/>
    </location>
</feature>
<feature type="repeat" description="LRR 21">
    <location>
        <begin position="606"/>
        <end position="629"/>
    </location>
</feature>
<feature type="domain" description="Protein kinase" evidence="2">
    <location>
        <begin position="743"/>
        <end position="1014"/>
    </location>
</feature>
<feature type="active site" description="Proton acceptor" evidence="2 3">
    <location>
        <position position="869"/>
    </location>
</feature>
<feature type="binding site" evidence="2">
    <location>
        <begin position="749"/>
        <end position="757"/>
    </location>
    <ligand>
        <name>ATP</name>
        <dbReference type="ChEBI" id="CHEBI:30616"/>
    </ligand>
</feature>
<feature type="binding site" evidence="2">
    <location>
        <position position="771"/>
    </location>
    <ligand>
        <name>ATP</name>
        <dbReference type="ChEBI" id="CHEBI:30616"/>
    </ligand>
</feature>
<feature type="glycosylation site" description="N-linked (GlcNAc...) asparagine" evidence="1">
    <location>
        <position position="26"/>
    </location>
</feature>
<feature type="glycosylation site" description="N-linked (GlcNAc...) asparagine" evidence="1">
    <location>
        <position position="54"/>
    </location>
</feature>
<feature type="glycosylation site" description="N-linked (GlcNAc...) asparagine" evidence="1">
    <location>
        <position position="83"/>
    </location>
</feature>
<feature type="glycosylation site" description="N-linked (GlcNAc...) asparagine" evidence="1">
    <location>
        <position position="116"/>
    </location>
</feature>
<feature type="glycosylation site" description="N-linked (GlcNAc...) asparagine" evidence="1">
    <location>
        <position position="132"/>
    </location>
</feature>
<feature type="glycosylation site" description="N-linked (GlcNAc...) asparagine" evidence="1">
    <location>
        <position position="204"/>
    </location>
</feature>
<feature type="glycosylation site" description="N-linked (GlcNAc...) asparagine" evidence="1">
    <location>
        <position position="217"/>
    </location>
</feature>
<feature type="glycosylation site" description="N-linked (GlcNAc...) asparagine" evidence="1">
    <location>
        <position position="231"/>
    </location>
</feature>
<feature type="glycosylation site" description="N-linked (GlcNAc...) asparagine" evidence="1">
    <location>
        <position position="311"/>
    </location>
</feature>
<feature type="glycosylation site" description="N-linked (GlcNAc...) asparagine" evidence="1">
    <location>
        <position position="321"/>
    </location>
</feature>
<feature type="glycosylation site" description="N-linked (GlcNAc...) asparagine" evidence="1">
    <location>
        <position position="327"/>
    </location>
</feature>
<feature type="glycosylation site" description="N-linked (GlcNAc...) asparagine" evidence="1">
    <location>
        <position position="383"/>
    </location>
</feature>
<feature type="glycosylation site" description="N-linked (GlcNAc...) asparagine" evidence="1">
    <location>
        <position position="388"/>
    </location>
</feature>
<feature type="glycosylation site" description="N-linked (GlcNAc...) asparagine" evidence="1">
    <location>
        <position position="482"/>
    </location>
</feature>
<feature type="glycosylation site" description="N-linked (GlcNAc...) asparagine" evidence="1">
    <location>
        <position position="546"/>
    </location>
</feature>
<feature type="glycosylation site" description="N-linked (GlcNAc...) asparagine" evidence="1">
    <location>
        <position position="568"/>
    </location>
</feature>
<feature type="glycosylation site" description="N-linked (GlcNAc...) asparagine" evidence="1">
    <location>
        <position position="576"/>
    </location>
</feature>
<feature type="glycosylation site" description="N-linked (GlcNAc...) asparagine" evidence="1">
    <location>
        <position position="592"/>
    </location>
</feature>
<feature type="glycosylation site" description="N-linked (GlcNAc...) asparagine" evidence="1">
    <location>
        <position position="632"/>
    </location>
</feature>
<feature type="mutagenesis site" description="Loss of PSK binding activity." evidence="5">
    <location>
        <begin position="503"/>
        <end position="517"/>
    </location>
</feature>
<feature type="mutagenesis site" description="Loss of PSK binding activity." evidence="5">
    <location>
        <begin position="518"/>
        <end position="538"/>
    </location>
</feature>
<feature type="helix" evidence="6">
    <location>
        <begin position="31"/>
        <end position="43"/>
    </location>
</feature>
<feature type="strand" evidence="6">
    <location>
        <begin position="44"/>
        <end position="46"/>
    </location>
</feature>
<feature type="strand" evidence="6">
    <location>
        <begin position="54"/>
        <end position="59"/>
    </location>
</feature>
<feature type="helix" evidence="6">
    <location>
        <begin position="63"/>
        <end position="65"/>
    </location>
</feature>
<feature type="strand" evidence="6">
    <location>
        <begin position="69"/>
        <end position="73"/>
    </location>
</feature>
<feature type="turn" evidence="6">
    <location>
        <begin position="74"/>
        <end position="78"/>
    </location>
</feature>
<feature type="strand" evidence="6">
    <location>
        <begin position="86"/>
        <end position="92"/>
    </location>
</feature>
<feature type="strand" evidence="6">
    <location>
        <begin position="99"/>
        <end position="101"/>
    </location>
</feature>
<feature type="helix" evidence="6">
    <location>
        <begin position="104"/>
        <end position="108"/>
    </location>
</feature>
<feature type="strand" evidence="6">
    <location>
        <begin position="114"/>
        <end position="116"/>
    </location>
</feature>
<feature type="strand" evidence="6">
    <location>
        <begin position="119"/>
        <end position="124"/>
    </location>
</feature>
<feature type="helix" evidence="6">
    <location>
        <begin position="130"/>
        <end position="132"/>
    </location>
</feature>
<feature type="strand" evidence="6">
    <location>
        <begin position="138"/>
        <end position="140"/>
    </location>
</feature>
<feature type="strand" evidence="6">
    <location>
        <begin position="147"/>
        <end position="149"/>
    </location>
</feature>
<feature type="strand" evidence="6">
    <location>
        <begin position="160"/>
        <end position="163"/>
    </location>
</feature>
<feature type="strand" evidence="6">
    <location>
        <begin position="166"/>
        <end position="172"/>
    </location>
</feature>
<feature type="turn" evidence="6">
    <location>
        <begin position="175"/>
        <end position="179"/>
    </location>
</feature>
<feature type="strand" evidence="6">
    <location>
        <begin position="186"/>
        <end position="188"/>
    </location>
</feature>
<feature type="strand" evidence="6">
    <location>
        <begin position="191"/>
        <end position="196"/>
    </location>
</feature>
<feature type="helix" evidence="6">
    <location>
        <begin position="200"/>
        <end position="204"/>
    </location>
</feature>
<feature type="strand" evidence="6">
    <location>
        <begin position="210"/>
        <end position="212"/>
    </location>
</feature>
<feature type="strand" evidence="6">
    <location>
        <begin position="215"/>
        <end position="220"/>
    </location>
</feature>
<feature type="helix" evidence="6">
    <location>
        <begin position="224"/>
        <end position="228"/>
    </location>
</feature>
<feature type="strand" evidence="6">
    <location>
        <begin position="234"/>
        <end position="236"/>
    </location>
</feature>
<feature type="strand" evidence="6">
    <location>
        <begin position="239"/>
        <end position="244"/>
    </location>
</feature>
<feature type="helix" evidence="6">
    <location>
        <begin position="248"/>
        <end position="252"/>
    </location>
</feature>
<feature type="strand" evidence="6">
    <location>
        <begin position="257"/>
        <end position="260"/>
    </location>
</feature>
<feature type="strand" evidence="6">
    <location>
        <begin position="263"/>
        <end position="268"/>
    </location>
</feature>
<feature type="helix" evidence="6">
    <location>
        <begin position="273"/>
        <end position="275"/>
    </location>
</feature>
<feature type="strand" evidence="6">
    <location>
        <begin position="282"/>
        <end position="284"/>
    </location>
</feature>
<feature type="strand" evidence="6">
    <location>
        <begin position="287"/>
        <end position="290"/>
    </location>
</feature>
<feature type="helix" evidence="6">
    <location>
        <begin position="296"/>
        <end position="299"/>
    </location>
</feature>
<feature type="strand" evidence="6">
    <location>
        <begin position="306"/>
        <end position="308"/>
    </location>
</feature>
<feature type="strand" evidence="6">
    <location>
        <begin position="315"/>
        <end position="317"/>
    </location>
</feature>
<feature type="turn" evidence="6">
    <location>
        <begin position="322"/>
        <end position="324"/>
    </location>
</feature>
<feature type="strand" evidence="6">
    <location>
        <begin position="330"/>
        <end position="332"/>
    </location>
</feature>
<feature type="strand" evidence="6">
    <location>
        <begin position="335"/>
        <end position="340"/>
    </location>
</feature>
<feature type="helix" evidence="6">
    <location>
        <begin position="346"/>
        <end position="348"/>
    </location>
</feature>
<feature type="strand" evidence="6">
    <location>
        <begin position="354"/>
        <end position="356"/>
    </location>
</feature>
<feature type="helix" evidence="6">
    <location>
        <begin position="368"/>
        <end position="372"/>
    </location>
</feature>
<feature type="strand" evidence="6">
    <location>
        <begin position="378"/>
        <end position="380"/>
    </location>
</feature>
<feature type="helix" evidence="6">
    <location>
        <begin position="389"/>
        <end position="396"/>
    </location>
</feature>
<feature type="strand" evidence="6">
    <location>
        <begin position="404"/>
        <end position="406"/>
    </location>
</feature>
<feature type="strand" evidence="6">
    <location>
        <begin position="429"/>
        <end position="431"/>
    </location>
</feature>
<feature type="helix" evidence="6">
    <location>
        <begin position="443"/>
        <end position="447"/>
    </location>
</feature>
<feature type="strand" evidence="6">
    <location>
        <begin position="453"/>
        <end position="455"/>
    </location>
</feature>
<feature type="helix" evidence="6">
    <location>
        <begin position="467"/>
        <end position="471"/>
    </location>
</feature>
<feature type="strand" evidence="6">
    <location>
        <begin position="477"/>
        <end position="479"/>
    </location>
</feature>
<feature type="strand" evidence="8">
    <location>
        <begin position="486"/>
        <end position="488"/>
    </location>
</feature>
<feature type="helix" evidence="6">
    <location>
        <begin position="491"/>
        <end position="495"/>
    </location>
</feature>
<feature type="helix" evidence="6">
    <location>
        <begin position="497"/>
        <end position="500"/>
    </location>
</feature>
<feature type="strand" evidence="6">
    <location>
        <begin position="515"/>
        <end position="517"/>
    </location>
</feature>
<feature type="strand" evidence="6">
    <location>
        <begin position="526"/>
        <end position="530"/>
    </location>
</feature>
<feature type="helix" evidence="6">
    <location>
        <begin position="531"/>
        <end position="533"/>
    </location>
</feature>
<feature type="strand" evidence="6">
    <location>
        <begin position="537"/>
        <end position="539"/>
    </location>
</feature>
<feature type="helix" evidence="6">
    <location>
        <begin position="551"/>
        <end position="555"/>
    </location>
</feature>
<feature type="strand" evidence="6">
    <location>
        <begin position="561"/>
        <end position="563"/>
    </location>
</feature>
<feature type="helix" evidence="6">
    <location>
        <begin position="575"/>
        <end position="579"/>
    </location>
</feature>
<feature type="strand" evidence="6">
    <location>
        <begin position="585"/>
        <end position="587"/>
    </location>
</feature>
<feature type="helix" evidence="6">
    <location>
        <begin position="599"/>
        <end position="603"/>
    </location>
</feature>
<feature type="strand" evidence="6">
    <location>
        <begin position="609"/>
        <end position="611"/>
    </location>
</feature>
<feature type="strand" evidence="7">
    <location>
        <begin position="614"/>
        <end position="620"/>
    </location>
</feature>
<feature type="helix" evidence="7">
    <location>
        <begin position="625"/>
        <end position="628"/>
    </location>
</feature>
<feature type="helix" evidence="6">
    <location>
        <begin position="632"/>
        <end position="635"/>
    </location>
</feature>
<feature type="strand" evidence="6">
    <location>
        <begin position="641"/>
        <end position="643"/>
    </location>
</feature>
<keyword id="KW-0002">3D-structure</keyword>
<keyword id="KW-0067">ATP-binding</keyword>
<keyword id="KW-1003">Cell membrane</keyword>
<keyword id="KW-0325">Glycoprotein</keyword>
<keyword id="KW-0418">Kinase</keyword>
<keyword id="KW-0433">Leucine-rich repeat</keyword>
<keyword id="KW-0472">Membrane</keyword>
<keyword id="KW-0547">Nucleotide-binding</keyword>
<keyword id="KW-0675">Receptor</keyword>
<keyword id="KW-0677">Repeat</keyword>
<keyword id="KW-0723">Serine/threonine-protein kinase</keyword>
<keyword id="KW-0732">Signal</keyword>
<keyword id="KW-0808">Transferase</keyword>
<keyword id="KW-0812">Transmembrane</keyword>
<keyword id="KW-1133">Transmembrane helix</keyword>
<proteinExistence type="evidence at protein level"/>
<protein>
    <recommendedName>
        <fullName>Phytosulfokine receptor 1</fullName>
        <shortName>DcPSKR1</shortName>
        <ecNumber>2.7.11.1</ecNumber>
    </recommendedName>
    <alternativeName>
        <fullName>Phytosulfokine LRR receptor kinase 1</fullName>
    </alternativeName>
</protein>
<gene>
    <name type="primary">PSKR</name>
</gene>
<comment type="function">
    <text evidence="4">Phytosulfokine receptor with a serine/threonine-protein kinase activity. Regulates, in response to phytosulfokine binding, a signaling cascade involved in plant cell differentiation, organogenesis and somatic embryogenesis.</text>
</comment>
<comment type="catalytic activity">
    <reaction>
        <text>L-seryl-[protein] + ATP = O-phospho-L-seryl-[protein] + ADP + H(+)</text>
        <dbReference type="Rhea" id="RHEA:17989"/>
        <dbReference type="Rhea" id="RHEA-COMP:9863"/>
        <dbReference type="Rhea" id="RHEA-COMP:11604"/>
        <dbReference type="ChEBI" id="CHEBI:15378"/>
        <dbReference type="ChEBI" id="CHEBI:29999"/>
        <dbReference type="ChEBI" id="CHEBI:30616"/>
        <dbReference type="ChEBI" id="CHEBI:83421"/>
        <dbReference type="ChEBI" id="CHEBI:456216"/>
        <dbReference type="EC" id="2.7.11.1"/>
    </reaction>
</comment>
<comment type="catalytic activity">
    <reaction>
        <text>L-threonyl-[protein] + ATP = O-phospho-L-threonyl-[protein] + ADP + H(+)</text>
        <dbReference type="Rhea" id="RHEA:46608"/>
        <dbReference type="Rhea" id="RHEA-COMP:11060"/>
        <dbReference type="Rhea" id="RHEA-COMP:11605"/>
        <dbReference type="ChEBI" id="CHEBI:15378"/>
        <dbReference type="ChEBI" id="CHEBI:30013"/>
        <dbReference type="ChEBI" id="CHEBI:30616"/>
        <dbReference type="ChEBI" id="CHEBI:61977"/>
        <dbReference type="ChEBI" id="CHEBI:456216"/>
        <dbReference type="EC" id="2.7.11.1"/>
    </reaction>
</comment>
<comment type="interaction">
    <interactant intactId="EBI-16172869">
        <id>Q8LPB4</id>
    </interactant>
    <interactant intactId="EBI-6299033">
        <id>Q9XIC7</id>
        <label>SERK2</label>
    </interactant>
    <organismsDiffer>true</organismsDiffer>
    <experiments>4</experiments>
</comment>
<comment type="subcellular location">
    <subcellularLocation>
        <location>Cell membrane</location>
        <topology>Single-pass type I membrane protein</topology>
    </subcellularLocation>
</comment>
<comment type="tissue specificity">
    <text evidence="4">Expressed ubiquitously in leaf, apical meristem, hypocotyl and root.</text>
</comment>
<comment type="PTM">
    <text evidence="4">N-glycosylated.</text>
</comment>
<comment type="miscellaneous">
    <text>The 36 amino-acid island present in the 18th leucine-rich repeat contains a ligand binding pocket that directly interacts with PSK. An island domain has also been found among the extracellular LRRs of the brassinosteroid receptor BRI1 and has been shown to be critical for its function.</text>
</comment>
<comment type="similarity">
    <text evidence="2">Belongs to the protein kinase superfamily. Ser/Thr protein kinase family.</text>
</comment>
<evidence type="ECO:0000255" key="1"/>
<evidence type="ECO:0000255" key="2">
    <source>
        <dbReference type="PROSITE-ProRule" id="PRU00159"/>
    </source>
</evidence>
<evidence type="ECO:0000255" key="3">
    <source>
        <dbReference type="PROSITE-ProRule" id="PRU10027"/>
    </source>
</evidence>
<evidence type="ECO:0000269" key="4">
    <source>
    </source>
</evidence>
<evidence type="ECO:0000269" key="5">
    <source>
    </source>
</evidence>
<evidence type="ECO:0007829" key="6">
    <source>
        <dbReference type="PDB" id="4Z5W"/>
    </source>
</evidence>
<evidence type="ECO:0007829" key="7">
    <source>
        <dbReference type="PDB" id="4Z61"/>
    </source>
</evidence>
<evidence type="ECO:0007829" key="8">
    <source>
        <dbReference type="PDB" id="4Z62"/>
    </source>
</evidence>
<name>PSKR1_DAUCA</name>